<comment type="function">
    <text evidence="1">Component of the large ribosomal subunit. The ribosome is a large ribonucleoprotein complex responsible for the synthesis of proteins in the cell.</text>
</comment>
<comment type="subunit">
    <text evidence="1">Component of the large ribosomal subunit.</text>
</comment>
<comment type="subcellular location">
    <subcellularLocation>
        <location evidence="1">Cytoplasm</location>
    </subcellularLocation>
</comment>
<comment type="PTM">
    <text evidence="2">Citrullinated by PADI4.</text>
</comment>
<comment type="similarity">
    <text evidence="4">Belongs to the eukaryotic ribosomal protein eL19 family.</text>
</comment>
<evidence type="ECO:0000250" key="1">
    <source>
        <dbReference type="UniProtKB" id="P84098"/>
    </source>
</evidence>
<evidence type="ECO:0000250" key="2">
    <source>
        <dbReference type="UniProtKB" id="P84099"/>
    </source>
</evidence>
<evidence type="ECO:0000256" key="3">
    <source>
        <dbReference type="SAM" id="MobiDB-lite"/>
    </source>
</evidence>
<evidence type="ECO:0000305" key="4"/>
<protein>
    <recommendedName>
        <fullName evidence="4">Large ribosomal subunit protein eL19</fullName>
    </recommendedName>
    <alternativeName>
        <fullName>60S ribosomal protein L19</fullName>
    </alternativeName>
</protein>
<gene>
    <name type="primary">RPL19</name>
</gene>
<feature type="chain" id="PRO_0000230304" description="Large ribosomal subunit protein eL19">
    <location>
        <begin position="1"/>
        <end position="196"/>
    </location>
</feature>
<feature type="region of interest" description="Disordered" evidence="3">
    <location>
        <begin position="157"/>
        <end position="176"/>
    </location>
</feature>
<feature type="compositionally biased region" description="Basic and acidic residues" evidence="3">
    <location>
        <begin position="159"/>
        <end position="176"/>
    </location>
</feature>
<feature type="modified residue" description="Citrulline" evidence="2">
    <location>
        <position position="5"/>
    </location>
</feature>
<feature type="modified residue" description="Phosphoserine" evidence="1">
    <location>
        <position position="13"/>
    </location>
</feature>
<feature type="modified residue" description="Citrulline" evidence="2">
    <location>
        <position position="16"/>
    </location>
</feature>
<feature type="modified residue" description="Citrulline" evidence="2">
    <location>
        <position position="38"/>
    </location>
</feature>
<feature type="modified residue" description="Phosphoserine" evidence="1">
    <location>
        <position position="164"/>
    </location>
</feature>
<feature type="modified residue" description="Phosphothreonine" evidence="1">
    <location>
        <position position="187"/>
    </location>
</feature>
<feature type="cross-link" description="Glycyl lysine isopeptide (Lys-Gly) (interchain with G-Cter in SUMO1)" evidence="1">
    <location>
        <position position="181"/>
    </location>
</feature>
<reference key="1">
    <citation type="submission" date="2007-06" db="EMBL/GenBank/DDBJ databases">
        <authorList>
            <consortium name="NIH - Mammalian Gene Collection (MGC) project"/>
        </authorList>
    </citation>
    <scope>NUCLEOTIDE SEQUENCE [LARGE SCALE MRNA]</scope>
    <source>
        <strain>Crossbred X Angus</strain>
        <strain>Hereford</strain>
        <tissue>Fetal pons</tissue>
        <tissue>Ileum</tissue>
    </source>
</reference>
<name>RL19_BOVIN</name>
<keyword id="KW-0002">3D-structure</keyword>
<keyword id="KW-0164">Citrullination</keyword>
<keyword id="KW-0963">Cytoplasm</keyword>
<keyword id="KW-1017">Isopeptide bond</keyword>
<keyword id="KW-0597">Phosphoprotein</keyword>
<keyword id="KW-1185">Reference proteome</keyword>
<keyword id="KW-0687">Ribonucleoprotein</keyword>
<keyword id="KW-0689">Ribosomal protein</keyword>
<keyword id="KW-0832">Ubl conjugation</keyword>
<proteinExistence type="evidence at protein level"/>
<organism>
    <name type="scientific">Bos taurus</name>
    <name type="common">Bovine</name>
    <dbReference type="NCBI Taxonomy" id="9913"/>
    <lineage>
        <taxon>Eukaryota</taxon>
        <taxon>Metazoa</taxon>
        <taxon>Chordata</taxon>
        <taxon>Craniata</taxon>
        <taxon>Vertebrata</taxon>
        <taxon>Euteleostomi</taxon>
        <taxon>Mammalia</taxon>
        <taxon>Eutheria</taxon>
        <taxon>Laurasiatheria</taxon>
        <taxon>Artiodactyla</taxon>
        <taxon>Ruminantia</taxon>
        <taxon>Pecora</taxon>
        <taxon>Bovidae</taxon>
        <taxon>Bovinae</taxon>
        <taxon>Bos</taxon>
    </lineage>
</organism>
<accession>Q3T0W9</accession>
<accession>A5PJA9</accession>
<dbReference type="EMBL" id="BC102223">
    <property type="protein sequence ID" value="AAI02224.1"/>
    <property type="molecule type" value="mRNA"/>
</dbReference>
<dbReference type="EMBL" id="BC142030">
    <property type="protein sequence ID" value="AAI42031.1"/>
    <property type="molecule type" value="mRNA"/>
</dbReference>
<dbReference type="RefSeq" id="NP_001035606.1">
    <property type="nucleotide sequence ID" value="NM_001040516.2"/>
</dbReference>
<dbReference type="PDB" id="6MTD">
    <property type="method" value="EM"/>
    <property type="resolution" value="3.30 A"/>
    <property type="chains" value="R=2-181"/>
</dbReference>
<dbReference type="PDB" id="6MTE">
    <property type="method" value="EM"/>
    <property type="resolution" value="3.40 A"/>
    <property type="chains" value="R=2-181"/>
</dbReference>
<dbReference type="PDB" id="6ZVK">
    <property type="method" value="EM"/>
    <property type="resolution" value="3.49 A"/>
    <property type="chains" value="32=2-181"/>
</dbReference>
<dbReference type="PDB" id="7A01">
    <property type="method" value="EM"/>
    <property type="resolution" value="3.60 A"/>
    <property type="chains" value="32=2-181"/>
</dbReference>
<dbReference type="PDB" id="7NFX">
    <property type="method" value="EM"/>
    <property type="resolution" value="3.20 A"/>
    <property type="chains" value="R=2-181"/>
</dbReference>
<dbReference type="PDB" id="7NWG">
    <property type="method" value="EM"/>
    <property type="resolution" value="3.80 A"/>
    <property type="chains" value="R3=1-196"/>
</dbReference>
<dbReference type="PDB" id="7NWH">
    <property type="method" value="EM"/>
    <property type="resolution" value="4.10 A"/>
    <property type="chains" value="R=1-196"/>
</dbReference>
<dbReference type="PDB" id="7NWI">
    <property type="method" value="EM"/>
    <property type="resolution" value="3.13 A"/>
    <property type="chains" value="R=1-196"/>
</dbReference>
<dbReference type="PDB" id="7O7Y">
    <property type="method" value="EM"/>
    <property type="resolution" value="2.20 A"/>
    <property type="chains" value="BR=1-196"/>
</dbReference>
<dbReference type="PDB" id="7O7Z">
    <property type="method" value="EM"/>
    <property type="resolution" value="2.40 A"/>
    <property type="chains" value="BR=1-196"/>
</dbReference>
<dbReference type="PDB" id="7O80">
    <property type="method" value="EM"/>
    <property type="resolution" value="2.90 A"/>
    <property type="chains" value="BR=1-196"/>
</dbReference>
<dbReference type="PDB" id="7O81">
    <property type="method" value="EM"/>
    <property type="resolution" value="3.10 A"/>
    <property type="chains" value="BR=1-196"/>
</dbReference>
<dbReference type="PDB" id="7OBR">
    <property type="method" value="EM"/>
    <property type="resolution" value="2.80 A"/>
    <property type="chains" value="R=2-181"/>
</dbReference>
<dbReference type="PDB" id="7OYD">
    <property type="method" value="EM"/>
    <property type="resolution" value="2.30 A"/>
    <property type="chains" value="R=1-196"/>
</dbReference>
<dbReference type="PDB" id="7QWQ">
    <property type="method" value="EM"/>
    <property type="resolution" value="2.83 A"/>
    <property type="chains" value="R=1-196"/>
</dbReference>
<dbReference type="PDB" id="7QWR">
    <property type="method" value="EM"/>
    <property type="resolution" value="2.90 A"/>
    <property type="chains" value="R=1-196"/>
</dbReference>
<dbReference type="PDB" id="7QWS">
    <property type="method" value="EM"/>
    <property type="resolution" value="3.40 A"/>
    <property type="chains" value="R=1-196"/>
</dbReference>
<dbReference type="PDB" id="8BTK">
    <property type="method" value="EM"/>
    <property type="resolution" value="3.50 A"/>
    <property type="chains" value="BR=1-196"/>
</dbReference>
<dbReference type="PDBsum" id="6MTD"/>
<dbReference type="PDBsum" id="6MTE"/>
<dbReference type="PDBsum" id="6ZVK"/>
<dbReference type="PDBsum" id="7A01"/>
<dbReference type="PDBsum" id="7NFX"/>
<dbReference type="PDBsum" id="7NWG"/>
<dbReference type="PDBsum" id="7NWH"/>
<dbReference type="PDBsum" id="7NWI"/>
<dbReference type="PDBsum" id="7O7Y"/>
<dbReference type="PDBsum" id="7O7Z"/>
<dbReference type="PDBsum" id="7O80"/>
<dbReference type="PDBsum" id="7O81"/>
<dbReference type="PDBsum" id="7OBR"/>
<dbReference type="PDBsum" id="7OYD"/>
<dbReference type="PDBsum" id="7QWQ"/>
<dbReference type="PDBsum" id="7QWR"/>
<dbReference type="PDBsum" id="7QWS"/>
<dbReference type="PDBsum" id="8BTK"/>
<dbReference type="EMDB" id="EMD-11459"/>
<dbReference type="EMDB" id="EMD-11590"/>
<dbReference type="EMDB" id="EMD-12303"/>
<dbReference type="EMDB" id="EMD-12631"/>
<dbReference type="EMDB" id="EMD-12632"/>
<dbReference type="EMDB" id="EMD-12633"/>
<dbReference type="EMDB" id="EMD-12756"/>
<dbReference type="EMDB" id="EMD-12757"/>
<dbReference type="EMDB" id="EMD-12758"/>
<dbReference type="EMDB" id="EMD-12759"/>
<dbReference type="EMDB" id="EMD-12801"/>
<dbReference type="EMDB" id="EMD-14191"/>
<dbReference type="EMDB" id="EMD-14192"/>
<dbReference type="EMDB" id="EMD-14193"/>
<dbReference type="EMDB" id="EMD-16232"/>
<dbReference type="EMDB" id="EMD-9240"/>
<dbReference type="EMDB" id="EMD-9242"/>
<dbReference type="SMR" id="Q3T0W9"/>
<dbReference type="FunCoup" id="Q3T0W9">
    <property type="interactions" value="3013"/>
</dbReference>
<dbReference type="STRING" id="9913.ENSBTAP00000002666"/>
<dbReference type="PaxDb" id="9913-ENSBTAP00000002666"/>
<dbReference type="PeptideAtlas" id="Q3T0W9"/>
<dbReference type="Ensembl" id="ENSBTAT00000002666.6">
    <property type="protein sequence ID" value="ENSBTAP00000002666.5"/>
    <property type="gene ID" value="ENSBTAG00000002060.6"/>
</dbReference>
<dbReference type="GeneID" id="510615"/>
<dbReference type="KEGG" id="bta:510615"/>
<dbReference type="CTD" id="6143"/>
<dbReference type="VEuPathDB" id="HostDB:ENSBTAG00000002060"/>
<dbReference type="VGNC" id="VGNC:49956">
    <property type="gene designation" value="RPL19"/>
</dbReference>
<dbReference type="eggNOG" id="KOG1696">
    <property type="taxonomic scope" value="Eukaryota"/>
</dbReference>
<dbReference type="GeneTree" id="ENSGT00390000012628"/>
<dbReference type="HOGENOM" id="CLU_083919_0_1_1"/>
<dbReference type="InParanoid" id="Q3T0W9"/>
<dbReference type="OMA" id="NRVWIDP"/>
<dbReference type="OrthoDB" id="5407653at2759"/>
<dbReference type="Reactome" id="R-BTA-156827">
    <property type="pathway name" value="L13a-mediated translational silencing of Ceruloplasmin expression"/>
</dbReference>
<dbReference type="Reactome" id="R-BTA-1799339">
    <property type="pathway name" value="SRP-dependent cotranslational protein targeting to membrane"/>
</dbReference>
<dbReference type="Reactome" id="R-BTA-6791226">
    <property type="pathway name" value="Major pathway of rRNA processing in the nucleolus and cytosol"/>
</dbReference>
<dbReference type="Reactome" id="R-BTA-72689">
    <property type="pathway name" value="Formation of a pool of free 40S subunits"/>
</dbReference>
<dbReference type="Reactome" id="R-BTA-72706">
    <property type="pathway name" value="GTP hydrolysis and joining of the 60S ribosomal subunit"/>
</dbReference>
<dbReference type="Reactome" id="R-BTA-975956">
    <property type="pathway name" value="Nonsense Mediated Decay (NMD) independent of the Exon Junction Complex (EJC)"/>
</dbReference>
<dbReference type="Reactome" id="R-BTA-975957">
    <property type="pathway name" value="Nonsense Mediated Decay (NMD) enhanced by the Exon Junction Complex (EJC)"/>
</dbReference>
<dbReference type="CD-CODE" id="D7FE2080">
    <property type="entry name" value="Nucleolus"/>
</dbReference>
<dbReference type="Proteomes" id="UP000009136">
    <property type="component" value="Chromosome 19"/>
</dbReference>
<dbReference type="Bgee" id="ENSBTAG00000002060">
    <property type="expression patterns" value="Expressed in adenohypophysis and 107 other cell types or tissues"/>
</dbReference>
<dbReference type="GO" id="GO:0022625">
    <property type="term" value="C:cytosolic large ribosomal subunit"/>
    <property type="evidence" value="ECO:0000318"/>
    <property type="project" value="GO_Central"/>
</dbReference>
<dbReference type="GO" id="GO:0005730">
    <property type="term" value="C:nucleolus"/>
    <property type="evidence" value="ECO:0007669"/>
    <property type="project" value="Ensembl"/>
</dbReference>
<dbReference type="GO" id="GO:0045202">
    <property type="term" value="C:synapse"/>
    <property type="evidence" value="ECO:0007669"/>
    <property type="project" value="Ensembl"/>
</dbReference>
<dbReference type="GO" id="GO:0003723">
    <property type="term" value="F:RNA binding"/>
    <property type="evidence" value="ECO:0000318"/>
    <property type="project" value="GO_Central"/>
</dbReference>
<dbReference type="GO" id="GO:0003735">
    <property type="term" value="F:structural constituent of ribosome"/>
    <property type="evidence" value="ECO:0000318"/>
    <property type="project" value="GO_Central"/>
</dbReference>
<dbReference type="GO" id="GO:0002181">
    <property type="term" value="P:cytoplasmic translation"/>
    <property type="evidence" value="ECO:0007669"/>
    <property type="project" value="Ensembl"/>
</dbReference>
<dbReference type="CDD" id="cd01417">
    <property type="entry name" value="Ribosomal_L19e_E"/>
    <property type="match status" value="1"/>
</dbReference>
<dbReference type="FunFam" id="1.10.1200.240:FF:000001">
    <property type="entry name" value="Ribosomal protein L19"/>
    <property type="match status" value="1"/>
</dbReference>
<dbReference type="FunFam" id="1.10.1650.10:FF:000001">
    <property type="entry name" value="Ribosomal protein L19"/>
    <property type="match status" value="1"/>
</dbReference>
<dbReference type="Gene3D" id="1.10.1200.240">
    <property type="match status" value="1"/>
</dbReference>
<dbReference type="Gene3D" id="1.10.1650.10">
    <property type="match status" value="1"/>
</dbReference>
<dbReference type="HAMAP" id="MF_01475">
    <property type="entry name" value="Ribosomal_eL19"/>
    <property type="match status" value="1"/>
</dbReference>
<dbReference type="InterPro" id="IPR035970">
    <property type="entry name" value="60S_ribosomal_eL19_sf"/>
</dbReference>
<dbReference type="InterPro" id="IPR039547">
    <property type="entry name" value="Ribosomal_eL19"/>
</dbReference>
<dbReference type="InterPro" id="IPR023638">
    <property type="entry name" value="Ribosomal_eL19_CS"/>
</dbReference>
<dbReference type="InterPro" id="IPR000196">
    <property type="entry name" value="Ribosomal_eL19_dom"/>
</dbReference>
<dbReference type="InterPro" id="IPR015972">
    <property type="entry name" value="Ribosomal_eL19_dom1"/>
</dbReference>
<dbReference type="InterPro" id="IPR033935">
    <property type="entry name" value="Ribosomal_eL19_euk"/>
</dbReference>
<dbReference type="NCBIfam" id="NF006343">
    <property type="entry name" value="PRK08570.1"/>
    <property type="match status" value="1"/>
</dbReference>
<dbReference type="PANTHER" id="PTHR10722">
    <property type="entry name" value="60S RIBOSOMAL PROTEIN L19"/>
    <property type="match status" value="1"/>
</dbReference>
<dbReference type="Pfam" id="PF01280">
    <property type="entry name" value="Ribosomal_L19e"/>
    <property type="match status" value="1"/>
</dbReference>
<dbReference type="Pfam" id="PF25476">
    <property type="entry name" value="Ribosomal_L19e_C"/>
    <property type="match status" value="1"/>
</dbReference>
<dbReference type="SMART" id="SM01416">
    <property type="entry name" value="Ribosomal_L19e"/>
    <property type="match status" value="1"/>
</dbReference>
<dbReference type="SUPFAM" id="SSF48140">
    <property type="entry name" value="Ribosomal protein L19 (L19e)"/>
    <property type="match status" value="1"/>
</dbReference>
<dbReference type="PROSITE" id="PS00526">
    <property type="entry name" value="RIBOSOMAL_L19E"/>
    <property type="match status" value="1"/>
</dbReference>
<sequence length="196" mass="23466">MSMLRLQKRLASSVLRCGKKKVWLDPNETNEIANANSRQQIRKLIKDGLIIRKPVTVHSRARCRKNTLARRKGRHMGIGKRKGTANARMPEKVTWMRRMRILRRLLRRYRESKKIDRHMYHSLYLKVKGNVFKNKRILMEHIHKLKADKARKKLLADQAEARRSKTKEARKRREERLQAKKEEIIKTLSKEEETKK</sequence>